<evidence type="ECO:0000255" key="1">
    <source>
        <dbReference type="HAMAP-Rule" id="MF_01866"/>
    </source>
</evidence>
<feature type="chain" id="PRO_0000375299" description="Protein YcgL">
    <location>
        <begin position="1"/>
        <end position="108"/>
    </location>
</feature>
<feature type="domain" description="YcgL" evidence="1">
    <location>
        <begin position="12"/>
        <end position="96"/>
    </location>
</feature>
<name>YCGL_ECOK1</name>
<gene>
    <name evidence="1" type="primary">ycgL</name>
    <name type="ordered locus">Ecok1_10990</name>
    <name type="ORF">APECO1_292</name>
</gene>
<organism>
    <name type="scientific">Escherichia coli O1:K1 / APEC</name>
    <dbReference type="NCBI Taxonomy" id="405955"/>
    <lineage>
        <taxon>Bacteria</taxon>
        <taxon>Pseudomonadati</taxon>
        <taxon>Pseudomonadota</taxon>
        <taxon>Gammaproteobacteria</taxon>
        <taxon>Enterobacterales</taxon>
        <taxon>Enterobacteriaceae</taxon>
        <taxon>Escherichia</taxon>
    </lineage>
</organism>
<dbReference type="EMBL" id="DQ335213">
    <property type="protein sequence ID" value="ABC70506.1"/>
    <property type="molecule type" value="Genomic_DNA"/>
</dbReference>
<dbReference type="EMBL" id="CP000468">
    <property type="protein sequence ID" value="ABJ00593.1"/>
    <property type="molecule type" value="Genomic_DNA"/>
</dbReference>
<dbReference type="BMRB" id="A1AAA3"/>
<dbReference type="SMR" id="A1AAA3"/>
<dbReference type="KEGG" id="ecv:APECO1_292"/>
<dbReference type="HOGENOM" id="CLU_155118_1_0_6"/>
<dbReference type="Proteomes" id="UP000008216">
    <property type="component" value="Chromosome"/>
</dbReference>
<dbReference type="Gene3D" id="3.10.510.20">
    <property type="entry name" value="YcgL domain"/>
    <property type="match status" value="1"/>
</dbReference>
<dbReference type="HAMAP" id="MF_01866">
    <property type="entry name" value="UPF0745"/>
    <property type="match status" value="1"/>
</dbReference>
<dbReference type="InterPro" id="IPR038068">
    <property type="entry name" value="YcgL-like_sf"/>
</dbReference>
<dbReference type="InterPro" id="IPR027354">
    <property type="entry name" value="YcgL_dom"/>
</dbReference>
<dbReference type="PANTHER" id="PTHR38109">
    <property type="entry name" value="PROTEIN YCGL"/>
    <property type="match status" value="1"/>
</dbReference>
<dbReference type="PANTHER" id="PTHR38109:SF1">
    <property type="entry name" value="PROTEIN YCGL"/>
    <property type="match status" value="1"/>
</dbReference>
<dbReference type="Pfam" id="PF05166">
    <property type="entry name" value="YcgL"/>
    <property type="match status" value="1"/>
</dbReference>
<dbReference type="SUPFAM" id="SSF160191">
    <property type="entry name" value="YcgL-like"/>
    <property type="match status" value="1"/>
</dbReference>
<dbReference type="PROSITE" id="PS51648">
    <property type="entry name" value="YCGL"/>
    <property type="match status" value="1"/>
</dbReference>
<keyword id="KW-1185">Reference proteome</keyword>
<accession>A1AAA3</accession>
<accession>Q2LD68</accession>
<protein>
    <recommendedName>
        <fullName evidence="1">Protein YcgL</fullName>
    </recommendedName>
</protein>
<proteinExistence type="inferred from homology"/>
<sequence>MPKPGILKSKSMFCVIYRSSKRDQTYLYVEKKDDFSRVPEELMKGFGQPQLAMILPLDGRKKLVNADIEKVKQALTEQGYYLQLPPPPEDLLKQHLSVMGQKTDDTNK</sequence>
<reference key="1">
    <citation type="submission" date="2005-12" db="EMBL/GenBank/DDBJ databases">
        <title>Avian pathogenic Escherichia coli strain O1 contains multiple copies of the sitABCD iron transport system within its genome.</title>
        <authorList>
            <person name="Johnson T.J."/>
            <person name="Nolan L.K."/>
        </authorList>
    </citation>
    <scope>NUCLEOTIDE SEQUENCE [GENOMIC DNA]</scope>
</reference>
<reference key="2">
    <citation type="journal article" date="2007" name="J. Bacteriol.">
        <title>The genome sequence of avian pathogenic Escherichia coli strain O1:K1:H7 shares strong similarities with human extraintestinal pathogenic E. coli genomes.</title>
        <authorList>
            <person name="Johnson T.J."/>
            <person name="Kariyawasam S."/>
            <person name="Wannemuehler Y."/>
            <person name="Mangiamele P."/>
            <person name="Johnson S.J."/>
            <person name="Doetkott C."/>
            <person name="Skyberg J.A."/>
            <person name="Lynne A.M."/>
            <person name="Johnson J.R."/>
            <person name="Nolan L.K."/>
        </authorList>
    </citation>
    <scope>NUCLEOTIDE SEQUENCE [LARGE SCALE GENOMIC DNA]</scope>
</reference>